<sequence>MANRLKEKYTNEVIPALTEQFNYSSVMAVPKVDKIVINMGVGEAVNNAKTLEKAAAELALISGQKPLITKAKKSIAGFRLREGVAIGAKVTLRGERMYEFLDKLVSVSLPRVRDFHGVPTKSFDGRGNYTLGVKEQLIFPEINFDNVDKVRGMDIVIVTTANTDEEGRELLKGLGMPFAK</sequence>
<comment type="function">
    <text evidence="1">This is one of the proteins that bind and probably mediate the attachment of the 5S RNA into the large ribosomal subunit, where it forms part of the central protuberance. In the 70S ribosome it contacts protein S13 of the 30S subunit (bridge B1b), connecting the 2 subunits; this bridge is implicated in subunit movement. Contacts the P site tRNA; the 5S rRNA and some of its associated proteins might help stabilize positioning of ribosome-bound tRNAs.</text>
</comment>
<comment type="subunit">
    <text evidence="1">Part of the 50S ribosomal subunit; part of the 5S rRNA/L5/L18/L25 subcomplex. Contacts the 5S rRNA and the P site tRNA. Forms a bridge to the 30S subunit in the 70S ribosome.</text>
</comment>
<comment type="similarity">
    <text evidence="1">Belongs to the universal ribosomal protein uL5 family.</text>
</comment>
<evidence type="ECO:0000255" key="1">
    <source>
        <dbReference type="HAMAP-Rule" id="MF_01333"/>
    </source>
</evidence>
<evidence type="ECO:0000305" key="2"/>
<protein>
    <recommendedName>
        <fullName evidence="1">Large ribosomal subunit protein uL5</fullName>
    </recommendedName>
    <alternativeName>
        <fullName evidence="2">50S ribosomal protein L5</fullName>
    </alternativeName>
</protein>
<name>RL5_STRT1</name>
<keyword id="KW-0687">Ribonucleoprotein</keyword>
<keyword id="KW-0689">Ribosomal protein</keyword>
<keyword id="KW-0694">RNA-binding</keyword>
<keyword id="KW-0699">rRNA-binding</keyword>
<keyword id="KW-0820">tRNA-binding</keyword>
<gene>
    <name evidence="1" type="primary">rplE</name>
    <name type="ordered locus">str1922</name>
</gene>
<feature type="chain" id="PRO_0000243072" description="Large ribosomal subunit protein uL5">
    <location>
        <begin position="1"/>
        <end position="180"/>
    </location>
</feature>
<proteinExistence type="inferred from homology"/>
<reference key="1">
    <citation type="journal article" date="2004" name="Nat. Biotechnol.">
        <title>Complete sequence and comparative genome analysis of the dairy bacterium Streptococcus thermophilus.</title>
        <authorList>
            <person name="Bolotin A."/>
            <person name="Quinquis B."/>
            <person name="Renault P."/>
            <person name="Sorokin A."/>
            <person name="Ehrlich S.D."/>
            <person name="Kulakauskas S."/>
            <person name="Lapidus A."/>
            <person name="Goltsman E."/>
            <person name="Mazur M."/>
            <person name="Pusch G.D."/>
            <person name="Fonstein M."/>
            <person name="Overbeek R."/>
            <person name="Kyprides N."/>
            <person name="Purnelle B."/>
            <person name="Prozzi D."/>
            <person name="Ngui K."/>
            <person name="Masuy D."/>
            <person name="Hancy F."/>
            <person name="Burteau S."/>
            <person name="Boutry M."/>
            <person name="Delcour J."/>
            <person name="Goffeau A."/>
            <person name="Hols P."/>
        </authorList>
    </citation>
    <scope>NUCLEOTIDE SEQUENCE [LARGE SCALE GENOMIC DNA]</scope>
    <source>
        <strain>CNRZ 1066</strain>
    </source>
</reference>
<dbReference type="EMBL" id="CP000024">
    <property type="protein sequence ID" value="AAV63435.1"/>
    <property type="molecule type" value="Genomic_DNA"/>
</dbReference>
<dbReference type="RefSeq" id="WP_002946163.1">
    <property type="nucleotide sequence ID" value="NC_006449.1"/>
</dbReference>
<dbReference type="SMR" id="Q5LXS3"/>
<dbReference type="GeneID" id="66899650"/>
<dbReference type="KEGG" id="stc:str1922"/>
<dbReference type="HOGENOM" id="CLU_061015_2_1_9"/>
<dbReference type="GO" id="GO:1990904">
    <property type="term" value="C:ribonucleoprotein complex"/>
    <property type="evidence" value="ECO:0007669"/>
    <property type="project" value="UniProtKB-KW"/>
</dbReference>
<dbReference type="GO" id="GO:0005840">
    <property type="term" value="C:ribosome"/>
    <property type="evidence" value="ECO:0007669"/>
    <property type="project" value="UniProtKB-KW"/>
</dbReference>
<dbReference type="GO" id="GO:0019843">
    <property type="term" value="F:rRNA binding"/>
    <property type="evidence" value="ECO:0007669"/>
    <property type="project" value="UniProtKB-UniRule"/>
</dbReference>
<dbReference type="GO" id="GO:0003735">
    <property type="term" value="F:structural constituent of ribosome"/>
    <property type="evidence" value="ECO:0007669"/>
    <property type="project" value="InterPro"/>
</dbReference>
<dbReference type="GO" id="GO:0000049">
    <property type="term" value="F:tRNA binding"/>
    <property type="evidence" value="ECO:0007669"/>
    <property type="project" value="UniProtKB-UniRule"/>
</dbReference>
<dbReference type="GO" id="GO:0006412">
    <property type="term" value="P:translation"/>
    <property type="evidence" value="ECO:0007669"/>
    <property type="project" value="UniProtKB-UniRule"/>
</dbReference>
<dbReference type="FunFam" id="3.30.1440.10:FF:000001">
    <property type="entry name" value="50S ribosomal protein L5"/>
    <property type="match status" value="1"/>
</dbReference>
<dbReference type="Gene3D" id="3.30.1440.10">
    <property type="match status" value="1"/>
</dbReference>
<dbReference type="HAMAP" id="MF_01333_B">
    <property type="entry name" value="Ribosomal_uL5_B"/>
    <property type="match status" value="1"/>
</dbReference>
<dbReference type="InterPro" id="IPR002132">
    <property type="entry name" value="Ribosomal_uL5"/>
</dbReference>
<dbReference type="InterPro" id="IPR020930">
    <property type="entry name" value="Ribosomal_uL5_bac-type"/>
</dbReference>
<dbReference type="InterPro" id="IPR031309">
    <property type="entry name" value="Ribosomal_uL5_C"/>
</dbReference>
<dbReference type="InterPro" id="IPR020929">
    <property type="entry name" value="Ribosomal_uL5_CS"/>
</dbReference>
<dbReference type="InterPro" id="IPR022803">
    <property type="entry name" value="Ribosomal_uL5_dom_sf"/>
</dbReference>
<dbReference type="InterPro" id="IPR031310">
    <property type="entry name" value="Ribosomal_uL5_N"/>
</dbReference>
<dbReference type="NCBIfam" id="NF000585">
    <property type="entry name" value="PRK00010.1"/>
    <property type="match status" value="1"/>
</dbReference>
<dbReference type="PANTHER" id="PTHR11994">
    <property type="entry name" value="60S RIBOSOMAL PROTEIN L11-RELATED"/>
    <property type="match status" value="1"/>
</dbReference>
<dbReference type="Pfam" id="PF00281">
    <property type="entry name" value="Ribosomal_L5"/>
    <property type="match status" value="1"/>
</dbReference>
<dbReference type="Pfam" id="PF00673">
    <property type="entry name" value="Ribosomal_L5_C"/>
    <property type="match status" value="1"/>
</dbReference>
<dbReference type="PIRSF" id="PIRSF002161">
    <property type="entry name" value="Ribosomal_L5"/>
    <property type="match status" value="1"/>
</dbReference>
<dbReference type="SUPFAM" id="SSF55282">
    <property type="entry name" value="RL5-like"/>
    <property type="match status" value="1"/>
</dbReference>
<dbReference type="PROSITE" id="PS00358">
    <property type="entry name" value="RIBOSOMAL_L5"/>
    <property type="match status" value="1"/>
</dbReference>
<accession>Q5LXS3</accession>
<organism>
    <name type="scientific">Streptococcus thermophilus (strain CNRZ 1066)</name>
    <dbReference type="NCBI Taxonomy" id="299768"/>
    <lineage>
        <taxon>Bacteria</taxon>
        <taxon>Bacillati</taxon>
        <taxon>Bacillota</taxon>
        <taxon>Bacilli</taxon>
        <taxon>Lactobacillales</taxon>
        <taxon>Streptococcaceae</taxon>
        <taxon>Streptococcus</taxon>
    </lineage>
</organism>